<comment type="function">
    <text evidence="1">Involved in the biosynthesis of osmoregulated periplasmic glucans (OPGs).</text>
</comment>
<comment type="pathway">
    <text evidence="1">Glycan metabolism; osmoregulated periplasmic glucan (OPG) biosynthesis.</text>
</comment>
<comment type="subcellular location">
    <subcellularLocation>
        <location evidence="1">Periplasm</location>
    </subcellularLocation>
</comment>
<comment type="similarity">
    <text evidence="1">Belongs to the OpgD/OpgG family.</text>
</comment>
<protein>
    <recommendedName>
        <fullName evidence="1">Glucans biosynthesis protein G</fullName>
    </recommendedName>
</protein>
<accession>B5QY15</accession>
<keyword id="KW-0574">Periplasm</keyword>
<keyword id="KW-0732">Signal</keyword>
<organism>
    <name type="scientific">Salmonella enteritidis PT4 (strain P125109)</name>
    <dbReference type="NCBI Taxonomy" id="550537"/>
    <lineage>
        <taxon>Bacteria</taxon>
        <taxon>Pseudomonadati</taxon>
        <taxon>Pseudomonadota</taxon>
        <taxon>Gammaproteobacteria</taxon>
        <taxon>Enterobacterales</taxon>
        <taxon>Enterobacteriaceae</taxon>
        <taxon>Salmonella</taxon>
    </lineage>
</organism>
<name>OPGG_SALEP</name>
<feature type="signal peptide" evidence="1">
    <location>
        <begin position="1"/>
        <end position="22"/>
    </location>
</feature>
<feature type="chain" id="PRO_5000397428" description="Glucans biosynthesis protein G">
    <location>
        <begin position="23"/>
        <end position="511"/>
    </location>
</feature>
<dbReference type="EMBL" id="AM933172">
    <property type="protein sequence ID" value="CAR33478.1"/>
    <property type="molecule type" value="Genomic_DNA"/>
</dbReference>
<dbReference type="RefSeq" id="WP_001562609.1">
    <property type="nucleotide sequence ID" value="NC_011294.1"/>
</dbReference>
<dbReference type="SMR" id="B5QY15"/>
<dbReference type="KEGG" id="set:SEN1898"/>
<dbReference type="HOGENOM" id="CLU_023403_2_0_6"/>
<dbReference type="UniPathway" id="UPA00637"/>
<dbReference type="Proteomes" id="UP000000613">
    <property type="component" value="Chromosome"/>
</dbReference>
<dbReference type="GO" id="GO:0030288">
    <property type="term" value="C:outer membrane-bounded periplasmic space"/>
    <property type="evidence" value="ECO:0007669"/>
    <property type="project" value="TreeGrafter"/>
</dbReference>
<dbReference type="GO" id="GO:0030246">
    <property type="term" value="F:carbohydrate binding"/>
    <property type="evidence" value="ECO:0007669"/>
    <property type="project" value="InterPro"/>
</dbReference>
<dbReference type="GO" id="GO:0003824">
    <property type="term" value="F:catalytic activity"/>
    <property type="evidence" value="ECO:0007669"/>
    <property type="project" value="InterPro"/>
</dbReference>
<dbReference type="GO" id="GO:0051274">
    <property type="term" value="P:beta-glucan biosynthetic process"/>
    <property type="evidence" value="ECO:0007669"/>
    <property type="project" value="TreeGrafter"/>
</dbReference>
<dbReference type="FunFam" id="2.60.40.10:FF:000294">
    <property type="entry name" value="Glucans biosynthesis protein G"/>
    <property type="match status" value="1"/>
</dbReference>
<dbReference type="FunFam" id="2.70.98.10:FF:000001">
    <property type="entry name" value="Glucans biosynthesis protein G"/>
    <property type="match status" value="1"/>
</dbReference>
<dbReference type="Gene3D" id="2.70.98.10">
    <property type="match status" value="1"/>
</dbReference>
<dbReference type="Gene3D" id="2.60.40.10">
    <property type="entry name" value="Immunoglobulins"/>
    <property type="match status" value="1"/>
</dbReference>
<dbReference type="HAMAP" id="MF_01069">
    <property type="entry name" value="MdoG_OpgG"/>
    <property type="match status" value="1"/>
</dbReference>
<dbReference type="InterPro" id="IPR011013">
    <property type="entry name" value="Gal_mutarotase_sf_dom"/>
</dbReference>
<dbReference type="InterPro" id="IPR014718">
    <property type="entry name" value="GH-type_carb-bd"/>
</dbReference>
<dbReference type="InterPro" id="IPR014438">
    <property type="entry name" value="Glucan_biosyn_MdoG/MdoD"/>
</dbReference>
<dbReference type="InterPro" id="IPR007444">
    <property type="entry name" value="Glucan_biosyn_MdoG_C"/>
</dbReference>
<dbReference type="InterPro" id="IPR013783">
    <property type="entry name" value="Ig-like_fold"/>
</dbReference>
<dbReference type="InterPro" id="IPR014756">
    <property type="entry name" value="Ig_E-set"/>
</dbReference>
<dbReference type="InterPro" id="IPR023704">
    <property type="entry name" value="MdoG_OpgG"/>
</dbReference>
<dbReference type="PANTHER" id="PTHR30504">
    <property type="entry name" value="GLUCANS BIOSYNTHESIS PROTEIN"/>
    <property type="match status" value="1"/>
</dbReference>
<dbReference type="PANTHER" id="PTHR30504:SF4">
    <property type="entry name" value="GLUCANS BIOSYNTHESIS PROTEIN G"/>
    <property type="match status" value="1"/>
</dbReference>
<dbReference type="Pfam" id="PF04349">
    <property type="entry name" value="MdoG"/>
    <property type="match status" value="1"/>
</dbReference>
<dbReference type="PIRSF" id="PIRSF006281">
    <property type="entry name" value="MdoG"/>
    <property type="match status" value="1"/>
</dbReference>
<dbReference type="SUPFAM" id="SSF81296">
    <property type="entry name" value="E set domains"/>
    <property type="match status" value="1"/>
</dbReference>
<dbReference type="SUPFAM" id="SSF74650">
    <property type="entry name" value="Galactose mutarotase-like"/>
    <property type="match status" value="1"/>
</dbReference>
<reference key="1">
    <citation type="journal article" date="2008" name="Genome Res.">
        <title>Comparative genome analysis of Salmonella enteritidis PT4 and Salmonella gallinarum 287/91 provides insights into evolutionary and host adaptation pathways.</title>
        <authorList>
            <person name="Thomson N.R."/>
            <person name="Clayton D.J."/>
            <person name="Windhorst D."/>
            <person name="Vernikos G."/>
            <person name="Davidson S."/>
            <person name="Churcher C."/>
            <person name="Quail M.A."/>
            <person name="Stevens M."/>
            <person name="Jones M.A."/>
            <person name="Watson M."/>
            <person name="Barron A."/>
            <person name="Layton A."/>
            <person name="Pickard D."/>
            <person name="Kingsley R.A."/>
            <person name="Bignell A."/>
            <person name="Clark L."/>
            <person name="Harris B."/>
            <person name="Ormond D."/>
            <person name="Abdellah Z."/>
            <person name="Brooks K."/>
            <person name="Cherevach I."/>
            <person name="Chillingworth T."/>
            <person name="Woodward J."/>
            <person name="Norberczak H."/>
            <person name="Lord A."/>
            <person name="Arrowsmith C."/>
            <person name="Jagels K."/>
            <person name="Moule S."/>
            <person name="Mungall K."/>
            <person name="Saunders M."/>
            <person name="Whitehead S."/>
            <person name="Chabalgoity J.A."/>
            <person name="Maskell D."/>
            <person name="Humphreys T."/>
            <person name="Roberts M."/>
            <person name="Barrow P.A."/>
            <person name="Dougan G."/>
            <person name="Parkhill J."/>
        </authorList>
    </citation>
    <scope>NUCLEOTIDE SEQUENCE [LARGE SCALE GENOMIC DNA]</scope>
    <source>
        <strain>P125109</strain>
    </source>
</reference>
<gene>
    <name evidence="1" type="primary">mdoG</name>
    <name evidence="1" type="synonym">opgG</name>
    <name type="ordered locus">SEN1898</name>
</gene>
<evidence type="ECO:0000255" key="1">
    <source>
        <dbReference type="HAMAP-Rule" id="MF_01069"/>
    </source>
</evidence>
<sequence length="511" mass="57845">MMKMRWLGAAIMLTLYASSSWAFSIDDVAKQAQSLAGKGYEAPKSNLPSVFRDMKYADYQQIQFNSDKAYWNNLKTPFKLEFYHQGMYFDTPVKINEVTATTVKRIKYSPDYFNFGNVQHDKDTVKDLGFAGFKVLYPINSKDKNDEIVSMLGASYFRVIGAGQVYGLSARGLAIDTALPSGEEFPRFREFWIERPKPTDKRLTVYALLDSPRATGAYRFVIIPGRDTVVDVQSKVYLRDKVGKLGVAPLTSMFLFGPNQPSPTTNYRPELHDSNGLSIHAGNGEWIWRPLNNPKHLAVSSYAMENPQGFGLLQRGREFSRFEDLDDRYDLRPSAWITPKGDWGKGKVELVEIPTNDETNDNIVAYWTPDQLPEPGKEMNFKYTLTFSRDEDKLHAPDNAWVLQTRRSTGDVKQSNLIRQPDGTIAFVVDFVGADMKKLPPDTPVAAQTSIGDNGEIVDSNVRYNPVTKGWRLMLRVKVKDAKKTTEMRAALVNADQTLSETWSYQLPANE</sequence>
<proteinExistence type="inferred from homology"/>